<sequence length="159" mass="18533">MKGDKKIIAHLNKLLGNELVAINQYFLHARMFKNWGLMRLNDKEYHESIDEMKHADRYIERILFLEGIPNLQDLGKLNIGEDIEEMLRSDLALELAGAKNLREGIAYADSIHDYVSRDLMIDILADEEEHIDWLETELDLIARLGIQNYAQAQILERKE</sequence>
<feature type="chain" id="PRO_0000192595" description="Bacterioferritin">
    <location>
        <begin position="1"/>
        <end position="159"/>
    </location>
</feature>
<feature type="domain" description="Ferritin-like diiron" evidence="3">
    <location>
        <begin position="1"/>
        <end position="145"/>
    </location>
</feature>
<feature type="binding site" evidence="3">
    <location>
        <position position="18"/>
    </location>
    <ligand>
        <name>Fe cation</name>
        <dbReference type="ChEBI" id="CHEBI:24875"/>
        <label>1</label>
    </ligand>
</feature>
<feature type="binding site" evidence="3">
    <location>
        <position position="51"/>
    </location>
    <ligand>
        <name>Fe cation</name>
        <dbReference type="ChEBI" id="CHEBI:24875"/>
        <label>1</label>
    </ligand>
</feature>
<feature type="binding site" evidence="3">
    <location>
        <position position="51"/>
    </location>
    <ligand>
        <name>Fe cation</name>
        <dbReference type="ChEBI" id="CHEBI:24875"/>
        <label>2</label>
    </ligand>
</feature>
<feature type="binding site" description="axial binding residue" evidence="3">
    <location>
        <position position="52"/>
    </location>
    <ligand>
        <name>heme b</name>
        <dbReference type="ChEBI" id="CHEBI:60344"/>
        <note>ligand shared between dimeric partners</note>
    </ligand>
    <ligandPart>
        <name>Fe</name>
        <dbReference type="ChEBI" id="CHEBI:18248"/>
    </ligandPart>
</feature>
<feature type="binding site" evidence="3">
    <location>
        <position position="54"/>
    </location>
    <ligand>
        <name>Fe cation</name>
        <dbReference type="ChEBI" id="CHEBI:24875"/>
        <label>1</label>
    </ligand>
</feature>
<feature type="binding site" evidence="3">
    <location>
        <position position="94"/>
    </location>
    <ligand>
        <name>Fe cation</name>
        <dbReference type="ChEBI" id="CHEBI:24875"/>
        <label>2</label>
    </ligand>
</feature>
<feature type="binding site" evidence="3">
    <location>
        <position position="127"/>
    </location>
    <ligand>
        <name>Fe cation</name>
        <dbReference type="ChEBI" id="CHEBI:24875"/>
        <label>1</label>
    </ligand>
</feature>
<feature type="binding site" evidence="3">
    <location>
        <position position="127"/>
    </location>
    <ligand>
        <name>Fe cation</name>
        <dbReference type="ChEBI" id="CHEBI:24875"/>
        <label>2</label>
    </ligand>
</feature>
<feature type="binding site" evidence="3">
    <location>
        <position position="130"/>
    </location>
    <ligand>
        <name>Fe cation</name>
        <dbReference type="ChEBI" id="CHEBI:24875"/>
        <label>2</label>
    </ligand>
</feature>
<proteinExistence type="inferred from homology"/>
<comment type="function">
    <text evidence="1">Iron-storage protein, whose ferroxidase center binds Fe(2+), oxidizes it using dioxygen to Fe(3+), and participates in the subsequent Fe(3+) oxide mineral core formation within the central cavity of the BFR protein shell.</text>
</comment>
<comment type="catalytic activity">
    <reaction>
        <text>4 Fe(2+) + O2 + 4 H(+) = 4 Fe(3+) + 2 H2O</text>
        <dbReference type="Rhea" id="RHEA:11148"/>
        <dbReference type="ChEBI" id="CHEBI:15377"/>
        <dbReference type="ChEBI" id="CHEBI:15378"/>
        <dbReference type="ChEBI" id="CHEBI:15379"/>
        <dbReference type="ChEBI" id="CHEBI:29033"/>
        <dbReference type="ChEBI" id="CHEBI:29034"/>
        <dbReference type="EC" id="1.16.3.1"/>
    </reaction>
</comment>
<comment type="catalytic activity">
    <reaction evidence="2">
        <text>Fe(2+)(in) = Fe(2+)(out)</text>
        <dbReference type="Rhea" id="RHEA:28486"/>
        <dbReference type="ChEBI" id="CHEBI:29033"/>
    </reaction>
</comment>
<comment type="cofactor">
    <cofactor evidence="1">
        <name>heme b</name>
        <dbReference type="ChEBI" id="CHEBI:60344"/>
    </cofactor>
    <text evidence="1">Binds 1 heme b (iron(II)-protoporphyrin IX) group per dimer.</text>
</comment>
<comment type="subunit">
    <text evidence="1">Homooligomer of 24 subunits, arranged as 12 dimers, that are packed together to form an approximately spherical molecule with a central cavity, in which large amounts of iron can be deposited.</text>
</comment>
<comment type="similarity">
    <text evidence="4">Belongs to the bacterioferritin family.</text>
</comment>
<name>BFR_SERMA</name>
<keyword id="KW-0349">Heme</keyword>
<keyword id="KW-0408">Iron</keyword>
<keyword id="KW-0409">Iron storage</keyword>
<keyword id="KW-0479">Metal-binding</keyword>
<keyword id="KW-0560">Oxidoreductase</keyword>
<accession>O68935</accession>
<reference key="1">
    <citation type="journal article" date="1999" name="J. Bacteriol.">
        <title>Phylogenetic analysis of L4-mediated autogenous control of the S10 ribosomal protein operon.</title>
        <authorList>
            <person name="Allen T."/>
            <person name="Shen P."/>
            <person name="Samsel L."/>
            <person name="Liu R."/>
            <person name="Lindahl L."/>
            <person name="Zengel J.M."/>
        </authorList>
    </citation>
    <scope>NUCLEOTIDE SEQUENCE [GENOMIC DNA]</scope>
</reference>
<gene>
    <name type="primary">bfr</name>
</gene>
<evidence type="ECO:0000250" key="1"/>
<evidence type="ECO:0000250" key="2">
    <source>
        <dbReference type="UniProtKB" id="Q9HWF9"/>
    </source>
</evidence>
<evidence type="ECO:0000255" key="3">
    <source>
        <dbReference type="PROSITE-ProRule" id="PRU00085"/>
    </source>
</evidence>
<evidence type="ECO:0000305" key="4"/>
<organism>
    <name type="scientific">Serratia marcescens</name>
    <dbReference type="NCBI Taxonomy" id="615"/>
    <lineage>
        <taxon>Bacteria</taxon>
        <taxon>Pseudomonadati</taxon>
        <taxon>Pseudomonadota</taxon>
        <taxon>Gammaproteobacteria</taxon>
        <taxon>Enterobacterales</taxon>
        <taxon>Yersiniaceae</taxon>
        <taxon>Serratia</taxon>
    </lineage>
</organism>
<dbReference type="EC" id="1.16.3.1"/>
<dbReference type="EMBL" id="AF058451">
    <property type="protein sequence ID" value="AAC14293.1"/>
    <property type="molecule type" value="Genomic_DNA"/>
</dbReference>
<dbReference type="RefSeq" id="WP_004929784.1">
    <property type="nucleotide sequence ID" value="NZ_WUUW01000011.1"/>
</dbReference>
<dbReference type="SMR" id="O68935"/>
<dbReference type="STRING" id="273526.SMDB11_3798"/>
<dbReference type="GeneID" id="93698981"/>
<dbReference type="OrthoDB" id="9800505at2"/>
<dbReference type="GO" id="GO:0005829">
    <property type="term" value="C:cytosol"/>
    <property type="evidence" value="ECO:0007669"/>
    <property type="project" value="TreeGrafter"/>
</dbReference>
<dbReference type="GO" id="GO:0008199">
    <property type="term" value="F:ferric iron binding"/>
    <property type="evidence" value="ECO:0007669"/>
    <property type="project" value="InterPro"/>
</dbReference>
<dbReference type="GO" id="GO:0004322">
    <property type="term" value="F:ferroxidase activity"/>
    <property type="evidence" value="ECO:0007669"/>
    <property type="project" value="UniProtKB-EC"/>
</dbReference>
<dbReference type="GO" id="GO:0020037">
    <property type="term" value="F:heme binding"/>
    <property type="evidence" value="ECO:0007669"/>
    <property type="project" value="TreeGrafter"/>
</dbReference>
<dbReference type="GO" id="GO:0006879">
    <property type="term" value="P:intracellular iron ion homeostasis"/>
    <property type="evidence" value="ECO:0007669"/>
    <property type="project" value="UniProtKB-KW"/>
</dbReference>
<dbReference type="GO" id="GO:0006826">
    <property type="term" value="P:iron ion transport"/>
    <property type="evidence" value="ECO:0007669"/>
    <property type="project" value="InterPro"/>
</dbReference>
<dbReference type="CDD" id="cd00907">
    <property type="entry name" value="Bacterioferritin"/>
    <property type="match status" value="1"/>
</dbReference>
<dbReference type="FunFam" id="1.20.1260.10:FF:000005">
    <property type="entry name" value="Bacterioferritin"/>
    <property type="match status" value="1"/>
</dbReference>
<dbReference type="Gene3D" id="1.20.1260.10">
    <property type="match status" value="1"/>
</dbReference>
<dbReference type="InterPro" id="IPR002024">
    <property type="entry name" value="Bacterioferritin"/>
</dbReference>
<dbReference type="InterPro" id="IPR012347">
    <property type="entry name" value="Ferritin-like"/>
</dbReference>
<dbReference type="InterPro" id="IPR009040">
    <property type="entry name" value="Ferritin-like_diiron"/>
</dbReference>
<dbReference type="InterPro" id="IPR009078">
    <property type="entry name" value="Ferritin-like_SF"/>
</dbReference>
<dbReference type="InterPro" id="IPR008331">
    <property type="entry name" value="Ferritin_DPS_dom"/>
</dbReference>
<dbReference type="NCBIfam" id="TIGR00754">
    <property type="entry name" value="bfr"/>
    <property type="match status" value="1"/>
</dbReference>
<dbReference type="PANTHER" id="PTHR30295">
    <property type="entry name" value="BACTERIOFERRITIN"/>
    <property type="match status" value="1"/>
</dbReference>
<dbReference type="PANTHER" id="PTHR30295:SF0">
    <property type="entry name" value="BACTERIOFERRITIN"/>
    <property type="match status" value="1"/>
</dbReference>
<dbReference type="Pfam" id="PF00210">
    <property type="entry name" value="Ferritin"/>
    <property type="match status" value="1"/>
</dbReference>
<dbReference type="PIRSF" id="PIRSF002560">
    <property type="entry name" value="Bacterioferritin"/>
    <property type="match status" value="1"/>
</dbReference>
<dbReference type="PRINTS" id="PR00601">
    <property type="entry name" value="BACFERRITIN"/>
</dbReference>
<dbReference type="SUPFAM" id="SSF47240">
    <property type="entry name" value="Ferritin-like"/>
    <property type="match status" value="1"/>
</dbReference>
<dbReference type="PROSITE" id="PS00549">
    <property type="entry name" value="BACTERIOFERRITIN"/>
    <property type="match status" value="1"/>
</dbReference>
<dbReference type="PROSITE" id="PS50905">
    <property type="entry name" value="FERRITIN_LIKE"/>
    <property type="match status" value="1"/>
</dbReference>
<protein>
    <recommendedName>
        <fullName>Bacterioferritin</fullName>
        <shortName>BFR</shortName>
        <ecNumber>1.16.3.1</ecNumber>
    </recommendedName>
    <alternativeName>
        <fullName>Cytochrome b-1</fullName>
    </alternativeName>
    <alternativeName>
        <fullName>Cytochrome b-557</fullName>
    </alternativeName>
</protein>